<evidence type="ECO:0000255" key="1">
    <source>
        <dbReference type="HAMAP-Rule" id="MF_00022"/>
    </source>
</evidence>
<evidence type="ECO:0000256" key="2">
    <source>
        <dbReference type="SAM" id="MobiDB-lite"/>
    </source>
</evidence>
<evidence type="ECO:0000305" key="3"/>
<reference key="1">
    <citation type="journal article" date="2007" name="PLoS Genet.">
        <title>Patterns and implications of gene gain and loss in the evolution of Prochlorococcus.</title>
        <authorList>
            <person name="Kettler G.C."/>
            <person name="Martiny A.C."/>
            <person name="Huang K."/>
            <person name="Zucker J."/>
            <person name="Coleman M.L."/>
            <person name="Rodrigue S."/>
            <person name="Chen F."/>
            <person name="Lapidus A."/>
            <person name="Ferriera S."/>
            <person name="Johnson J."/>
            <person name="Steglich C."/>
            <person name="Church G.M."/>
            <person name="Richardson P."/>
            <person name="Chisholm S.W."/>
        </authorList>
    </citation>
    <scope>NUCLEOTIDE SEQUENCE [LARGE SCALE GENOMIC DNA]</scope>
    <source>
        <strain>MIT 9211</strain>
    </source>
</reference>
<dbReference type="EC" id="6.1.1.17" evidence="1"/>
<dbReference type="EMBL" id="CP000878">
    <property type="protein sequence ID" value="ABX08405.1"/>
    <property type="status" value="ALT_INIT"/>
    <property type="molecule type" value="Genomic_DNA"/>
</dbReference>
<dbReference type="RefSeq" id="WP_041391422.1">
    <property type="nucleotide sequence ID" value="NC_009976.1"/>
</dbReference>
<dbReference type="SMR" id="A9BE95"/>
<dbReference type="STRING" id="93059.P9211_04741"/>
<dbReference type="KEGG" id="pmj:P9211_04741"/>
<dbReference type="eggNOG" id="COG0008">
    <property type="taxonomic scope" value="Bacteria"/>
</dbReference>
<dbReference type="HOGENOM" id="CLU_015768_6_0_3"/>
<dbReference type="OrthoDB" id="9807503at2"/>
<dbReference type="Proteomes" id="UP000000788">
    <property type="component" value="Chromosome"/>
</dbReference>
<dbReference type="GO" id="GO:0005829">
    <property type="term" value="C:cytosol"/>
    <property type="evidence" value="ECO:0007669"/>
    <property type="project" value="TreeGrafter"/>
</dbReference>
<dbReference type="GO" id="GO:0005524">
    <property type="term" value="F:ATP binding"/>
    <property type="evidence" value="ECO:0007669"/>
    <property type="project" value="UniProtKB-UniRule"/>
</dbReference>
<dbReference type="GO" id="GO:0004818">
    <property type="term" value="F:glutamate-tRNA ligase activity"/>
    <property type="evidence" value="ECO:0007669"/>
    <property type="project" value="UniProtKB-UniRule"/>
</dbReference>
<dbReference type="GO" id="GO:0000049">
    <property type="term" value="F:tRNA binding"/>
    <property type="evidence" value="ECO:0007669"/>
    <property type="project" value="InterPro"/>
</dbReference>
<dbReference type="GO" id="GO:0008270">
    <property type="term" value="F:zinc ion binding"/>
    <property type="evidence" value="ECO:0007669"/>
    <property type="project" value="InterPro"/>
</dbReference>
<dbReference type="GO" id="GO:0006424">
    <property type="term" value="P:glutamyl-tRNA aminoacylation"/>
    <property type="evidence" value="ECO:0007669"/>
    <property type="project" value="UniProtKB-UniRule"/>
</dbReference>
<dbReference type="CDD" id="cd00808">
    <property type="entry name" value="GluRS_core"/>
    <property type="match status" value="1"/>
</dbReference>
<dbReference type="FunFam" id="3.40.50.620:FF:000007">
    <property type="entry name" value="Glutamate--tRNA ligase"/>
    <property type="match status" value="1"/>
</dbReference>
<dbReference type="Gene3D" id="1.10.10.350">
    <property type="match status" value="1"/>
</dbReference>
<dbReference type="Gene3D" id="1.10.8.70">
    <property type="entry name" value="Glutamate-tRNA synthetase, class I, anticodon-binding domain 1"/>
    <property type="match status" value="1"/>
</dbReference>
<dbReference type="Gene3D" id="1.10.1160.10">
    <property type="entry name" value="Glutamyl-trna Synthetase, Domain 2"/>
    <property type="match status" value="1"/>
</dbReference>
<dbReference type="Gene3D" id="3.90.800.10">
    <property type="entry name" value="Glutamyl-tRNA Synthetase, Domain 3"/>
    <property type="match status" value="1"/>
</dbReference>
<dbReference type="Gene3D" id="3.40.50.620">
    <property type="entry name" value="HUPs"/>
    <property type="match status" value="1"/>
</dbReference>
<dbReference type="HAMAP" id="MF_00022">
    <property type="entry name" value="Glu_tRNA_synth_type1"/>
    <property type="match status" value="1"/>
</dbReference>
<dbReference type="InterPro" id="IPR045462">
    <property type="entry name" value="aa-tRNA-synth_I_cd-bd"/>
</dbReference>
<dbReference type="InterPro" id="IPR020751">
    <property type="entry name" value="aa-tRNA-synth_I_codon-bd_sub2"/>
</dbReference>
<dbReference type="InterPro" id="IPR001412">
    <property type="entry name" value="aa-tRNA-synth_I_CS"/>
</dbReference>
<dbReference type="InterPro" id="IPR008925">
    <property type="entry name" value="aa_tRNA-synth_I_cd-bd_sf"/>
</dbReference>
<dbReference type="InterPro" id="IPR004527">
    <property type="entry name" value="Glu-tRNA-ligase_bac/mito"/>
</dbReference>
<dbReference type="InterPro" id="IPR020752">
    <property type="entry name" value="Glu-tRNA-synth_I_codon-bd_sub1"/>
</dbReference>
<dbReference type="InterPro" id="IPR000924">
    <property type="entry name" value="Glu/Gln-tRNA-synth"/>
</dbReference>
<dbReference type="InterPro" id="IPR020058">
    <property type="entry name" value="Glu/Gln-tRNA-synth_Ib_cat-dom"/>
</dbReference>
<dbReference type="InterPro" id="IPR020061">
    <property type="entry name" value="Glu_tRNA_lig_a-bdl"/>
</dbReference>
<dbReference type="InterPro" id="IPR049940">
    <property type="entry name" value="GluQ/Sye"/>
</dbReference>
<dbReference type="InterPro" id="IPR033910">
    <property type="entry name" value="GluRS_core"/>
</dbReference>
<dbReference type="InterPro" id="IPR014729">
    <property type="entry name" value="Rossmann-like_a/b/a_fold"/>
</dbReference>
<dbReference type="NCBIfam" id="TIGR00464">
    <property type="entry name" value="gltX_bact"/>
    <property type="match status" value="1"/>
</dbReference>
<dbReference type="NCBIfam" id="NF004315">
    <property type="entry name" value="PRK05710.1-4"/>
    <property type="match status" value="1"/>
</dbReference>
<dbReference type="PANTHER" id="PTHR43311">
    <property type="entry name" value="GLUTAMATE--TRNA LIGASE"/>
    <property type="match status" value="1"/>
</dbReference>
<dbReference type="PANTHER" id="PTHR43311:SF2">
    <property type="entry name" value="GLUTAMATE--TRNA LIGASE, MITOCHONDRIAL-RELATED"/>
    <property type="match status" value="1"/>
</dbReference>
<dbReference type="Pfam" id="PF19269">
    <property type="entry name" value="Anticodon_2"/>
    <property type="match status" value="1"/>
</dbReference>
<dbReference type="Pfam" id="PF00749">
    <property type="entry name" value="tRNA-synt_1c"/>
    <property type="match status" value="1"/>
</dbReference>
<dbReference type="PRINTS" id="PR00987">
    <property type="entry name" value="TRNASYNTHGLU"/>
</dbReference>
<dbReference type="SUPFAM" id="SSF48163">
    <property type="entry name" value="An anticodon-binding domain of class I aminoacyl-tRNA synthetases"/>
    <property type="match status" value="1"/>
</dbReference>
<dbReference type="SUPFAM" id="SSF52374">
    <property type="entry name" value="Nucleotidylyl transferase"/>
    <property type="match status" value="1"/>
</dbReference>
<dbReference type="PROSITE" id="PS00178">
    <property type="entry name" value="AA_TRNA_LIGASE_I"/>
    <property type="match status" value="1"/>
</dbReference>
<feature type="chain" id="PRO_0000367737" description="Glutamate--tRNA ligase">
    <location>
        <begin position="1"/>
        <end position="476"/>
    </location>
</feature>
<feature type="region of interest" description="Disordered" evidence="2">
    <location>
        <begin position="109"/>
        <end position="133"/>
    </location>
</feature>
<feature type="short sequence motif" description="'HIGH' region" evidence="1">
    <location>
        <begin position="9"/>
        <end position="19"/>
    </location>
</feature>
<feature type="short sequence motif" description="'KMSKS' region" evidence="1">
    <location>
        <begin position="248"/>
        <end position="252"/>
    </location>
</feature>
<feature type="compositionally biased region" description="Basic and acidic residues" evidence="2">
    <location>
        <begin position="109"/>
        <end position="129"/>
    </location>
</feature>
<feature type="binding site" evidence="1">
    <location>
        <position position="251"/>
    </location>
    <ligand>
        <name>ATP</name>
        <dbReference type="ChEBI" id="CHEBI:30616"/>
    </ligand>
</feature>
<name>SYE_PROM4</name>
<protein>
    <recommendedName>
        <fullName evidence="1">Glutamate--tRNA ligase</fullName>
        <ecNumber evidence="1">6.1.1.17</ecNumber>
    </recommendedName>
    <alternativeName>
        <fullName evidence="1">Glutamyl-tRNA synthetase</fullName>
        <shortName evidence="1">GluRS</shortName>
    </alternativeName>
</protein>
<organism>
    <name type="scientific">Prochlorococcus marinus (strain MIT 9211)</name>
    <dbReference type="NCBI Taxonomy" id="93059"/>
    <lineage>
        <taxon>Bacteria</taxon>
        <taxon>Bacillati</taxon>
        <taxon>Cyanobacteriota</taxon>
        <taxon>Cyanophyceae</taxon>
        <taxon>Synechococcales</taxon>
        <taxon>Prochlorococcaceae</taxon>
        <taxon>Prochlorococcus</taxon>
    </lineage>
</organism>
<comment type="function">
    <text evidence="1">Catalyzes the attachment of glutamate to tRNA(Glu) in a two-step reaction: glutamate is first activated by ATP to form Glu-AMP and then transferred to the acceptor end of tRNA(Glu).</text>
</comment>
<comment type="catalytic activity">
    <reaction evidence="1">
        <text>tRNA(Glu) + L-glutamate + ATP = L-glutamyl-tRNA(Glu) + AMP + diphosphate</text>
        <dbReference type="Rhea" id="RHEA:23540"/>
        <dbReference type="Rhea" id="RHEA-COMP:9663"/>
        <dbReference type="Rhea" id="RHEA-COMP:9680"/>
        <dbReference type="ChEBI" id="CHEBI:29985"/>
        <dbReference type="ChEBI" id="CHEBI:30616"/>
        <dbReference type="ChEBI" id="CHEBI:33019"/>
        <dbReference type="ChEBI" id="CHEBI:78442"/>
        <dbReference type="ChEBI" id="CHEBI:78520"/>
        <dbReference type="ChEBI" id="CHEBI:456215"/>
        <dbReference type="EC" id="6.1.1.17"/>
    </reaction>
</comment>
<comment type="subunit">
    <text evidence="1">Monomer.</text>
</comment>
<comment type="subcellular location">
    <subcellularLocation>
        <location evidence="1">Cytoplasm</location>
    </subcellularLocation>
</comment>
<comment type="similarity">
    <text evidence="1">Belongs to the class-I aminoacyl-tRNA synthetase family. Glutamate--tRNA ligase type 1 subfamily.</text>
</comment>
<comment type="sequence caution" evidence="3">
    <conflict type="erroneous initiation">
        <sequence resource="EMBL-CDS" id="ABX08405"/>
    </conflict>
</comment>
<sequence>MAIKVRLAPSPTGKLHIGTARTALFNWLFARKNNGSFLIRIEDTDKERSQEEYKENILEGLDWLGLTWDAEPIIQSNRIEQHREAIKYLLEKGLAYRCFTTEEELAAMREEQKSRNKPPRYDNRHRSLSTEEESNFLSEGRTAVIRFRIDDNESIQWNDLVRGPMNWTGKDLGGDMVIARRAPANEIGDPLYNLVVVIDDGYMGITHVIRGEDHIANTAKQILLYKALGLTLPKFAHTPLILNAEGKKLSKRDGVTSISDFKEMGYTSKAMSNYMTLLGWSIPDGMDEKFTIEESSKVFDFDRVNKAGAKFDWEKLKWLNSQTIHDSSSEEILKAVEPLFNKEGWDLPNLEWSLKLIELIKPSMTLLTDSVEQSRFFFEDPLLNQDAINQLEIEGAKDSLKILLKQIDTSKINKLTVEHAKKLINDAAVFGGFKKGLIMKSLRAALLGCLQGPDVINSWILLSEINQDKSRIERCL</sequence>
<proteinExistence type="inferred from homology"/>
<gene>
    <name evidence="1" type="primary">gltX</name>
    <name type="ordered locus">P9211_04741</name>
</gene>
<accession>A9BE95</accession>
<keyword id="KW-0030">Aminoacyl-tRNA synthetase</keyword>
<keyword id="KW-0067">ATP-binding</keyword>
<keyword id="KW-0963">Cytoplasm</keyword>
<keyword id="KW-0436">Ligase</keyword>
<keyword id="KW-0547">Nucleotide-binding</keyword>
<keyword id="KW-0648">Protein biosynthesis</keyword>
<keyword id="KW-1185">Reference proteome</keyword>